<organism>
    <name type="scientific">Homo sapiens</name>
    <name type="common">Human</name>
    <dbReference type="NCBI Taxonomy" id="9606"/>
    <lineage>
        <taxon>Eukaryota</taxon>
        <taxon>Metazoa</taxon>
        <taxon>Chordata</taxon>
        <taxon>Craniata</taxon>
        <taxon>Vertebrata</taxon>
        <taxon>Euteleostomi</taxon>
        <taxon>Mammalia</taxon>
        <taxon>Eutheria</taxon>
        <taxon>Euarchontoglires</taxon>
        <taxon>Primates</taxon>
        <taxon>Haplorrhini</taxon>
        <taxon>Catarrhini</taxon>
        <taxon>Hominidae</taxon>
        <taxon>Homo</taxon>
    </lineage>
</organism>
<feature type="chain" id="PRO_0000219461" description="Transcription factor E2F1">
    <location>
        <begin position="1"/>
        <end position="437"/>
    </location>
</feature>
<feature type="DNA-binding region" evidence="2">
    <location>
        <begin position="110"/>
        <end position="194"/>
    </location>
</feature>
<feature type="region of interest" description="Disordered" evidence="3">
    <location>
        <begin position="42"/>
        <end position="87"/>
    </location>
</feature>
<feature type="region of interest" description="Cyclin A:CDK2 binding" evidence="23">
    <location>
        <begin position="67"/>
        <end position="108"/>
    </location>
</feature>
<feature type="region of interest" description="Interaction with BIRC2/c-IAP1" evidence="17">
    <location>
        <begin position="89"/>
        <end position="191"/>
    </location>
</feature>
<feature type="region of interest" description="Disordered" evidence="3">
    <location>
        <begin position="101"/>
        <end position="128"/>
    </location>
</feature>
<feature type="region of interest" description="Leucine-zipper">
    <location>
        <begin position="153"/>
        <end position="174"/>
    </location>
</feature>
<feature type="region of interest" description="Required for interaction with TRIM28" evidence="12">
    <location>
        <begin position="192"/>
        <end position="382"/>
    </location>
</feature>
<feature type="region of interest" description="Dimerization" evidence="2">
    <location>
        <begin position="195"/>
        <end position="284"/>
    </location>
</feature>
<feature type="region of interest" description="Disordered" evidence="3">
    <location>
        <begin position="300"/>
        <end position="349"/>
    </location>
</feature>
<feature type="region of interest" description="Transactivation">
    <location>
        <begin position="368"/>
        <end position="437"/>
    </location>
</feature>
<feature type="region of interest" description="RB1 binding" evidence="6">
    <location>
        <begin position="409"/>
        <end position="426"/>
    </location>
</feature>
<feature type="short sequence motif" description="DEF box">
    <location>
        <begin position="158"/>
        <end position="194"/>
    </location>
</feature>
<feature type="compositionally biased region" description="Low complexity" evidence="3">
    <location>
        <begin position="339"/>
        <end position="349"/>
    </location>
</feature>
<feature type="modified residue" description="N6-acetyllysine" evidence="4">
    <location>
        <position position="117"/>
    </location>
</feature>
<feature type="modified residue" description="N6-acetyllysine" evidence="4">
    <location>
        <position position="120"/>
    </location>
</feature>
<feature type="modified residue" description="N6-acetyllysine" evidence="4">
    <location>
        <position position="125"/>
    </location>
</feature>
<feature type="modified residue" description="N6-methyllysine; by SETD7" evidence="16">
    <location>
        <position position="185"/>
    </location>
</feature>
<feature type="modified residue" description="Phosphoserine; by CHEK2" evidence="33">
    <location>
        <position position="364"/>
    </location>
</feature>
<feature type="modified residue" description="Phosphoserine" evidence="35 36 37">
    <location>
        <position position="375"/>
    </location>
</feature>
<feature type="modified residue" description="Phosphoserine; by GSK3-beta" evidence="11 19">
    <location>
        <position position="403"/>
    </location>
</feature>
<feature type="modified residue" description="Phosphothreonine; by GSK3-beta" evidence="11">
    <location>
        <position position="433"/>
    </location>
</feature>
<feature type="sequence variant" id="VAR_048907" description="In dbSNP:rs35385772.">
    <original>G</original>
    <variation>S</variation>
    <location>
        <position position="200"/>
    </location>
</feature>
<feature type="sequence variant" id="VAR_013607" description="In dbSNP:rs3213172." evidence="28">
    <original>R</original>
    <variation>H</variation>
    <location>
        <position position="252"/>
    </location>
</feature>
<feature type="sequence variant" id="VAR_013608" description="In dbSNP:rs3213173." evidence="28">
    <original>V</original>
    <variation>M</variation>
    <location>
        <position position="276"/>
    </location>
</feature>
<feature type="sequence variant" id="VAR_013609" description="In dbSNP:rs3213174." evidence="28">
    <original>T</original>
    <variation>N</variation>
    <location>
        <position position="311"/>
    </location>
</feature>
<feature type="sequence variant" id="VAR_013610" description="In dbSNP:rs3213176." evidence="28">
    <original>G</original>
    <variation>S</variation>
    <location>
        <position position="393"/>
    </location>
</feature>
<feature type="mutagenesis site" description="Abolishes acetylation; when associated with R-120 and R-125." evidence="4">
    <original>K</original>
    <variation>R</variation>
    <location>
        <position position="117"/>
    </location>
</feature>
<feature type="mutagenesis site" description="Abolishes acetylation; when associated with R-117 and R-125." evidence="4">
    <original>K</original>
    <variation>R</variation>
    <location>
        <position position="120"/>
    </location>
</feature>
<feature type="mutagenesis site" description="Abolishes acetylation; when associated with R-117 and R-120." evidence="4">
    <original>K</original>
    <variation>R</variation>
    <location>
        <position position="125"/>
    </location>
</feature>
<feature type="mutagenesis site" description="Abolishes interaction with and repression of CEBPA and inhibition of adipogenesis." evidence="15">
    <original>L</original>
    <variation>E</variation>
    <location>
        <position position="132"/>
    </location>
</feature>
<feature type="mutagenesis site" description="Abrogates methylation by SETD7. Loss of interaction with L3MBTL3. Loss of ubiquitination by the CRL4-DCAF5 E3 ubiquitin ligase complex." evidence="16 20">
    <original>K</original>
    <variation>R</variation>
    <location>
        <position position="185"/>
    </location>
</feature>
<feature type="mutagenesis site" description="Abrogates in vitro phosphorylation by CHEK2 and CHEK2-dependent stabilization of E2F1 upon DNA damage." evidence="8">
    <original>S</original>
    <variation>A</variation>
    <location>
        <position position="364"/>
    </location>
</feature>
<feature type="mutagenesis site" description="Decreased phosphorylation by GSK3B, leading to abolished interaction with USP11 and subsequent deubiquitination." evidence="11 19">
    <original>S</original>
    <variation>A</variation>
    <location>
        <position position="403"/>
    </location>
</feature>
<feature type="mutagenesis site" description="No retinoblastoma protein binding. No effect on interaction with and repression of CEBPA." evidence="15 26">
    <original>Y</original>
    <variation>C</variation>
    <location>
        <position position="411"/>
    </location>
</feature>
<feature type="mutagenesis site" description="Decreased phosphorylation by GSK3B." evidence="11">
    <original>T</original>
    <variation>A</variation>
    <location>
        <position position="433"/>
    </location>
</feature>
<feature type="sequence conflict" description="In Ref. 8; AAD14150." evidence="32" ref="8">
    <original>KRRLDLETDHQYLAESSGPARGR</original>
    <variation>RTPGTPRRQRRLCPPRRPGRAPC</variation>
    <location>
        <begin position="89"/>
        <end position="111"/>
    </location>
</feature>
<feature type="sequence conflict" description="In Ref. 4; AAC50719." evidence="32" ref="4">
    <original>S</original>
    <variation>Y</variation>
    <location>
        <position position="313"/>
    </location>
</feature>
<feature type="sequence conflict" description="In Ref. 4; AAC50719." evidence="32" ref="4">
    <original>N</original>
    <variation>T</variation>
    <location>
        <position position="322"/>
    </location>
</feature>
<feature type="sequence conflict" description="In Ref. 4; AAC50719." evidence="32" ref="4">
    <original>T</original>
    <variation>N</variation>
    <location>
        <position position="329"/>
    </location>
</feature>
<feature type="helix" evidence="39">
    <location>
        <begin position="202"/>
        <end position="236"/>
    </location>
</feature>
<feature type="helix" evidence="39">
    <location>
        <begin position="238"/>
        <end position="243"/>
    </location>
</feature>
<feature type="strand" evidence="39">
    <location>
        <begin position="245"/>
        <end position="247"/>
    </location>
</feature>
<feature type="helix" evidence="39">
    <location>
        <begin position="248"/>
        <end position="252"/>
    </location>
</feature>
<feature type="turn" evidence="39">
    <location>
        <begin position="257"/>
        <end position="259"/>
    </location>
</feature>
<feature type="strand" evidence="39">
    <location>
        <begin position="260"/>
        <end position="266"/>
    </location>
</feature>
<feature type="strand" evidence="39">
    <location>
        <begin position="272"/>
        <end position="277"/>
    </location>
</feature>
<feature type="strand" evidence="39">
    <location>
        <begin position="282"/>
        <end position="287"/>
    </location>
</feature>
<feature type="strand" evidence="39">
    <location>
        <begin position="289"/>
        <end position="291"/>
    </location>
</feature>
<feature type="strand" evidence="39">
    <location>
        <begin position="294"/>
        <end position="296"/>
    </location>
</feature>
<feature type="helix" evidence="38">
    <location>
        <begin position="421"/>
        <end position="424"/>
    </location>
</feature>
<proteinExistence type="evidence at protein level"/>
<comment type="function">
    <text evidence="4 8 11 12 13 14 15 19 24">Transcription activator that binds DNA cooperatively with DP proteins through the E2 recognition site, 5'-TTTC[CG]CGC-3' found in the promoter region of a number of genes whose products are involved in cell cycle regulation or in DNA replication (PubMed:10675335, PubMed:12717439, PubMed:17050006, PubMed:17704056, PubMed:18625225, PubMed:28992046). The DRTF1/E2F complex functions in the control of cell-cycle progression from G1 to S phase (PubMed:10675335, PubMed:12717439, PubMed:17704056). E2F1 binds preferentially RB1 in a cell-cycle dependent manner (PubMed:10675335, PubMed:12717439, PubMed:17704056). It can mediate both cell proliferation and TP53/p53-dependent apoptosis (PubMed:8170954). Blocks adipocyte differentiation by binding to specific promoters repressing CEBPA binding to its target gene promoters (PubMed:20176812). Directly activates transcription of PEG10 (PubMed:17050006, PubMed:18625225, PubMed:28992046). Positively regulates transcription of RRP1B (PubMed:20040599).</text>
</comment>
<comment type="activity regulation">
    <text evidence="17">BIRC2/c-IAP1 stimulates its transcriptional activity.</text>
</comment>
<comment type="subunit">
    <text evidence="1 4 5 6 7 9 10 12 14 15 17 18 20 25 27">Component of the DRTF1/E2F transcription factor complex. Forms heterodimers with DP family members. The E2F1 complex binds specifically hypophosphorylated RB1, the interaction represses E2F1-driven transcription (PubMed:8336704). During the cell cycle, RB1 becomes phosphorylated in mid-to-late G1 phase, detaches from the DRTF1/E2F complex, rendering E2F transcriptionally active. Viral oncoproteins, notably E1A, T-antigen and HPV E7, are capable of sequestering RB1, thus releasing the active complex. Interacts with TRRAP, which probably mediates its interaction with histone acetyltransferase complexes, leading to transcription activation. Binds TOPBP1 and EAPP. Interacts with ARID3A. Interacts with TRIM28; the interaction inhibits E2F1 acetylation through recruiting HDAC1 and represses its transcriptional activity. Interaction with KAT2B; the interaction acetylates E2F1 enhancing its DNA-binding and transcriptional activity. Interacts with BIRC2/c-IAP1 (via BIR domains). The complex TFDP1:E2F1 interacts with CEBPA; the interaction prevents CEBPA binding to target genes promoters and represses its transcriptional activity (PubMed:20176812). Interacts with RRP1B (PubMed:20040599). Interacts with HCFC1 (PubMed:23629655). Interacts with KMT2E; the interaction is probably indirect and is mediated via HCFC1 (PubMed:23629655). Interacts with DCAF5 and L3MBTL3; the interaction requires methylation at Lys-185 and is necessary to target E2F1 for ubiquitination by the CRL4-DCAF5 E3 ubiquitin ligase complex (PubMed:29691401).</text>
</comment>
<comment type="subunit">
    <text evidence="21">(Microbial infection) Interacts with human cytomegalovirus/HHV-5 protein UL123.</text>
</comment>
<comment type="interaction">
    <interactant intactId="EBI-448924">
        <id>Q01094</id>
    </interactant>
    <interactant intactId="EBI-77613">
        <id>P05067</id>
        <label>APP</label>
    </interactant>
    <organismsDiffer>false</organismsDiffer>
    <experiments>3</experiments>
</comment>
<comment type="interaction">
    <interactant intactId="EBI-448924">
        <id>Q01094</id>
    </interactant>
    <interactant intactId="EBI-948192">
        <id>Q14201</id>
        <label>BTG3</label>
    </interactant>
    <organismsDiffer>false</organismsDiffer>
    <experiments>3</experiments>
</comment>
<comment type="interaction">
    <interactant intactId="EBI-448924">
        <id>Q01094</id>
    </interactant>
    <interactant intactId="EBI-394377">
        <id>P49336</id>
        <label>CDK8</label>
    </interactant>
    <organismsDiffer>false</organismsDiffer>
    <experiments>3</experiments>
</comment>
<comment type="interaction">
    <interactant intactId="EBI-448924">
        <id>Q01094</id>
    </interactant>
    <interactant intactId="EBI-1176171">
        <id>Q92466</id>
        <label>DDB2</label>
    </interactant>
    <organismsDiffer>false</organismsDiffer>
    <experiments>2</experiments>
</comment>
<comment type="interaction">
    <interactant intactId="EBI-448924">
        <id>Q01094</id>
    </interactant>
    <interactant intactId="EBI-301834">
        <id>Q13547</id>
        <label>HDAC1</label>
    </interactant>
    <organismsDiffer>false</organismsDiffer>
    <experiments>2</experiments>
</comment>
<comment type="interaction">
    <interactant intactId="EBI-448924">
        <id>Q01094</id>
    </interactant>
    <interactant intactId="EBI-477622">
        <id>Q92830</id>
        <label>KAT2A</label>
    </interactant>
    <organismsDiffer>false</organismsDiffer>
    <experiments>3</experiments>
</comment>
<comment type="interaction">
    <interactant intactId="EBI-448924">
        <id>Q01094</id>
    </interactant>
    <interactant intactId="EBI-2686809">
        <id>Q96JM7</id>
        <label>L3MBTL3</label>
    </interactant>
    <organismsDiffer>false</organismsDiffer>
    <experiments>2</experiments>
</comment>
<comment type="interaction">
    <interactant intactId="EBI-448924">
        <id>Q01094</id>
    </interactant>
    <interactant intactId="EBI-1565483">
        <id>Q8NEM0</id>
        <label>MCPH1</label>
    </interactant>
    <organismsDiffer>false</organismsDiffer>
    <experiments>6</experiments>
</comment>
<comment type="interaction">
    <interactant intactId="EBI-448924">
        <id>Q01094</id>
    </interactant>
    <interactant intactId="EBI-80830">
        <id>Q9Y618</id>
        <label>NCOR2</label>
    </interactant>
    <organismsDiffer>false</organismsDiffer>
    <experiments>2</experiments>
</comment>
<comment type="interaction">
    <interactant intactId="EBI-448924">
        <id>Q01094</id>
    </interactant>
    <interactant intactId="EBI-355676">
        <id>P09874</id>
        <label>PARP1</label>
    </interactant>
    <organismsDiffer>false</organismsDiffer>
    <experiments>3</experiments>
</comment>
<comment type="interaction">
    <interactant intactId="EBI-448924">
        <id>Q01094</id>
    </interactant>
    <interactant intactId="EBI-595869">
        <id>Q96IZ0</id>
        <label>PAWR</label>
    </interactant>
    <organismsDiffer>false</organismsDiffer>
    <experiments>2</experiments>
</comment>
<comment type="interaction">
    <interactant intactId="EBI-448924">
        <id>Q01094</id>
    </interactant>
    <interactant intactId="EBI-351098">
        <id>O14744</id>
        <label>PRMT5</label>
    </interactant>
    <organismsDiffer>false</organismsDiffer>
    <experiments>8</experiments>
</comment>
<comment type="interaction">
    <interactant intactId="EBI-448924">
        <id>Q01094</id>
    </interactant>
    <interactant intactId="EBI-491274">
        <id>P06400</id>
        <label>RB1</label>
    </interactant>
    <organismsDiffer>false</organismsDiffer>
    <experiments>29</experiments>
</comment>
<comment type="interaction">
    <interactant intactId="EBI-448924">
        <id>Q01094</id>
    </interactant>
    <interactant intactId="EBI-372051">
        <id>Q14684</id>
        <label>RRP1B</label>
    </interactant>
    <organismsDiffer>false</organismsDiffer>
    <experiments>10</experiments>
</comment>
<comment type="interaction">
    <interactant intactId="EBI-448924">
        <id>Q01094</id>
    </interactant>
    <interactant intactId="EBI-1802965">
        <id>Q96EB6</id>
        <label>SIRT1</label>
    </interactant>
    <organismsDiffer>false</organismsDiffer>
    <experiments>3</experiments>
</comment>
<comment type="interaction">
    <interactant intactId="EBI-448924">
        <id>Q01094</id>
    </interactant>
    <interactant intactId="EBI-298336">
        <id>P08047</id>
        <label>SP1</label>
    </interactant>
    <organismsDiffer>false</organismsDiffer>
    <experiments>2</experiments>
</comment>
<comment type="interaction">
    <interactant intactId="EBI-448924">
        <id>Q01094</id>
    </interactant>
    <interactant intactId="EBI-1057697">
        <id>P42224</id>
        <label>STAT1</label>
    </interactant>
    <organismsDiffer>false</organismsDiffer>
    <experiments>2</experiments>
</comment>
<comment type="interaction">
    <interactant intactId="EBI-448924">
        <id>Q01094</id>
    </interactant>
    <interactant intactId="EBI-749713">
        <id>Q14186</id>
        <label>TFDP1</label>
    </interactant>
    <organismsDiffer>false</organismsDiffer>
    <experiments>17</experiments>
</comment>
<comment type="interaction">
    <interactant intactId="EBI-448924">
        <id>Q01094</id>
    </interactant>
    <interactant intactId="EBI-308302">
        <id>Q92547</id>
        <label>TOPBP1</label>
    </interactant>
    <organismsDiffer>false</organismsDiffer>
    <experiments>3</experiments>
</comment>
<comment type="interaction">
    <interactant intactId="EBI-448924">
        <id>Q01094</id>
    </interactant>
    <interactant intactId="EBI-727384">
        <id>O95361</id>
        <label>TRIM16</label>
    </interactant>
    <organismsDiffer>false</organismsDiffer>
    <experiments>2</experiments>
</comment>
<comment type="interaction">
    <interactant intactId="EBI-448924">
        <id>Q01094</id>
    </interactant>
    <interactant intactId="EBI-866453">
        <id>P03129</id>
        <label>E7</label>
    </interactant>
    <organismsDiffer>true</organismsDiffer>
    <experiments>2</experiments>
</comment>
<comment type="interaction">
    <interactant intactId="EBI-448924">
        <id>Q01094</id>
    </interactant>
    <interactant intactId="EBI-1802585">
        <id>Q923E4</id>
        <label>Sirt1</label>
    </interactant>
    <organismsDiffer>true</organismsDiffer>
    <experiments>3</experiments>
</comment>
<comment type="subcellular location">
    <subcellularLocation>
        <location evidence="14 19">Nucleus</location>
    </subcellularLocation>
</comment>
<comment type="PTM">
    <text evidence="8 19 22">Phosphorylated by CDK2 and cyclin A-CDK2 in the S-phase (PubMed:12717439, PubMed:7838523). Phosphorylation at Ser-364 by CHEK2 stabilizes E2F1 upon DNA damage and regulates its effect on transcription and apoptosis (PubMed:12717439). Phosphorylation at Ser-403 by GSK3B promotes interaction with USP11, leading to its deubiquitination and stabilization (PubMed:28992046).</text>
</comment>
<comment type="PTM">
    <text evidence="19">Ubiquitinated via 'Lys-63'-linked ubiquitin, leading to its degradation (PubMed:28992046). Deubiquitinated by USP11 following phosphorylation by GSK3B, promoting its stability (PubMed:28992046).</text>
</comment>
<comment type="PTM">
    <text evidence="4 12">Acetylation stimulates DNA-binding. Enhanced under stress conditions such as DNA damage and inhibited by retinoblastoma protein RB1. Regulated by KAP1/TRIM28 which recruits HDAC1 to E2F1 resulting in deacetylation. Acetylated by P/CAF/KAT2B.</text>
</comment>
<comment type="PTM">
    <text evidence="16 20">Methylation at Lys-185 by SETD7 promotes E2F1 ubiquitin-dependent proteasomal degradation.</text>
</comment>
<comment type="similarity">
    <text evidence="32">Belongs to the E2F/DP family.</text>
</comment>
<comment type="sequence caution" evidence="32">
    <conflict type="erroneous initiation">
        <sequence resource="EMBL-CDS" id="AAB24289"/>
    </conflict>
    <text>Extended N-terminus.</text>
</comment>
<comment type="online information" name="Atlas of Genetics and Cytogenetics in Oncology and Haematology">
    <link uri="https://atlasgeneticsoncology.org/gene/40382/E2F1"/>
</comment>
<evidence type="ECO:0000250" key="1">
    <source>
        <dbReference type="UniProtKB" id="Q61501"/>
    </source>
</evidence>
<evidence type="ECO:0000255" key="2"/>
<evidence type="ECO:0000256" key="3">
    <source>
        <dbReference type="SAM" id="MobiDB-lite"/>
    </source>
</evidence>
<evidence type="ECO:0000269" key="4">
    <source>
    </source>
</evidence>
<evidence type="ECO:0000269" key="5">
    <source>
    </source>
</evidence>
<evidence type="ECO:0000269" key="6">
    <source>
    </source>
</evidence>
<evidence type="ECO:0000269" key="7">
    <source>
    </source>
</evidence>
<evidence type="ECO:0000269" key="8">
    <source>
    </source>
</evidence>
<evidence type="ECO:0000269" key="9">
    <source>
    </source>
</evidence>
<evidence type="ECO:0000269" key="10">
    <source>
    </source>
</evidence>
<evidence type="ECO:0000269" key="11">
    <source>
    </source>
</evidence>
<evidence type="ECO:0000269" key="12">
    <source>
    </source>
</evidence>
<evidence type="ECO:0000269" key="13">
    <source>
    </source>
</evidence>
<evidence type="ECO:0000269" key="14">
    <source>
    </source>
</evidence>
<evidence type="ECO:0000269" key="15">
    <source>
    </source>
</evidence>
<evidence type="ECO:0000269" key="16">
    <source>
    </source>
</evidence>
<evidence type="ECO:0000269" key="17">
    <source>
    </source>
</evidence>
<evidence type="ECO:0000269" key="18">
    <source>
    </source>
</evidence>
<evidence type="ECO:0000269" key="19">
    <source>
    </source>
</evidence>
<evidence type="ECO:0000269" key="20">
    <source>
    </source>
</evidence>
<evidence type="ECO:0000269" key="21">
    <source>
    </source>
</evidence>
<evidence type="ECO:0000269" key="22">
    <source>
    </source>
</evidence>
<evidence type="ECO:0000269" key="23">
    <source>
    </source>
</evidence>
<evidence type="ECO:0000269" key="24">
    <source>
    </source>
</evidence>
<evidence type="ECO:0000269" key="25">
    <source>
    </source>
</evidence>
<evidence type="ECO:0000269" key="26">
    <source>
    </source>
</evidence>
<evidence type="ECO:0000269" key="27">
    <source>
    </source>
</evidence>
<evidence type="ECO:0000269" key="28">
    <source ref="5"/>
</evidence>
<evidence type="ECO:0000303" key="29">
    <source>
    </source>
</evidence>
<evidence type="ECO:0000303" key="30">
    <source>
    </source>
</evidence>
<evidence type="ECO:0000303" key="31">
    <source>
    </source>
</evidence>
<evidence type="ECO:0000305" key="32"/>
<evidence type="ECO:0000305" key="33">
    <source>
    </source>
</evidence>
<evidence type="ECO:0000312" key="34">
    <source>
        <dbReference type="HGNC" id="HGNC:3113"/>
    </source>
</evidence>
<evidence type="ECO:0007744" key="35">
    <source>
    </source>
</evidence>
<evidence type="ECO:0007744" key="36">
    <source>
    </source>
</evidence>
<evidence type="ECO:0007744" key="37">
    <source>
    </source>
</evidence>
<evidence type="ECO:0007829" key="38">
    <source>
        <dbReference type="PDB" id="1O9K"/>
    </source>
</evidence>
<evidence type="ECO:0007829" key="39">
    <source>
        <dbReference type="PDB" id="2AZE"/>
    </source>
</evidence>
<keyword id="KW-0002">3D-structure</keyword>
<keyword id="KW-0007">Acetylation</keyword>
<keyword id="KW-0010">Activator</keyword>
<keyword id="KW-0053">Apoptosis</keyword>
<keyword id="KW-0131">Cell cycle</keyword>
<keyword id="KW-0238">DNA-binding</keyword>
<keyword id="KW-0945">Host-virus interaction</keyword>
<keyword id="KW-0488">Methylation</keyword>
<keyword id="KW-0539">Nucleus</keyword>
<keyword id="KW-0597">Phosphoprotein</keyword>
<keyword id="KW-1267">Proteomics identification</keyword>
<keyword id="KW-1185">Reference proteome</keyword>
<keyword id="KW-0804">Transcription</keyword>
<keyword id="KW-0805">Transcription regulation</keyword>
<keyword id="KW-0832">Ubl conjugation</keyword>
<sequence>MALAGAPAGGPCAPALEALLGAGALRLLDSSQIVIISAAQDASAPPAPTGPAAPAAGPCDPDLLLFATPQAPRPTPSAPRPALGRPPVKRRLDLETDHQYLAESSGPARGRGRHPGKGVKSPGEKSRYETSLNLTTKRFLELLSHSADGVVDLNWAAEVLKVQKRRIYDITNVLEGIQLIAKKSKNHIQWLGSHTTVGVGGRLEGLTQDLRQLQESEQQLDHLMNICTTQLRLLSEDTDSQRLAYVTCQDLRSIADPAEQMVMVIKAPPETQLQAVDSSENFQISLKSKQGPIDVFLCPEETVGGISPGKTPSQEVTSEEENRATDSATIVSPPPSSPPSSLTTDPSQSLLSLEQEPLLSRMGSLRAPVDEDRLSPLVAADSLLEHVREDFSGLLPEEFISLSPPHEALDYHFGLEEGEGIRDLFDCDFGDLTPLDF</sequence>
<gene>
    <name evidence="31 34" type="primary">E2F1</name>
    <name evidence="29" type="synonym">RBBP3</name>
</gene>
<dbReference type="EMBL" id="M96577">
    <property type="protein sequence ID" value="AAA35782.1"/>
    <property type="molecule type" value="mRNA"/>
</dbReference>
<dbReference type="EMBL" id="U47677">
    <property type="protein sequence ID" value="AAC50719.1"/>
    <property type="molecule type" value="Genomic_DNA"/>
</dbReference>
<dbReference type="EMBL" id="U47675">
    <property type="protein sequence ID" value="AAC50719.1"/>
    <property type="status" value="JOINED"/>
    <property type="molecule type" value="Genomic_DNA"/>
</dbReference>
<dbReference type="EMBL" id="U47676">
    <property type="protein sequence ID" value="AAC50719.1"/>
    <property type="status" value="JOINED"/>
    <property type="molecule type" value="Genomic_DNA"/>
</dbReference>
<dbReference type="EMBL" id="S49592">
    <property type="protein sequence ID" value="AAB24289.1"/>
    <property type="status" value="ALT_INIT"/>
    <property type="molecule type" value="mRNA"/>
</dbReference>
<dbReference type="EMBL" id="AF516106">
    <property type="protein sequence ID" value="AAM47604.1"/>
    <property type="molecule type" value="Genomic_DNA"/>
</dbReference>
<dbReference type="EMBL" id="AL121906">
    <property type="status" value="NOT_ANNOTATED_CDS"/>
    <property type="molecule type" value="Genomic_DNA"/>
</dbReference>
<dbReference type="EMBL" id="BC050369">
    <property type="protein sequence ID" value="AAH50369.1"/>
    <property type="molecule type" value="mRNA"/>
</dbReference>
<dbReference type="EMBL" id="BC058902">
    <property type="protein sequence ID" value="AAH58902.1"/>
    <property type="molecule type" value="mRNA"/>
</dbReference>
<dbReference type="EMBL" id="S74230">
    <property type="protein sequence ID" value="AAD14150.1"/>
    <property type="molecule type" value="Genomic_DNA"/>
</dbReference>
<dbReference type="CCDS" id="CCDS13224.1"/>
<dbReference type="PIR" id="JC4929">
    <property type="entry name" value="JC4929"/>
</dbReference>
<dbReference type="RefSeq" id="NP_005216.1">
    <property type="nucleotide sequence ID" value="NM_005225.3"/>
</dbReference>
<dbReference type="PDB" id="1H24">
    <property type="method" value="X-ray"/>
    <property type="resolution" value="2.50 A"/>
    <property type="chains" value="E=87-95"/>
</dbReference>
<dbReference type="PDB" id="1O9K">
    <property type="method" value="X-ray"/>
    <property type="resolution" value="2.60 A"/>
    <property type="chains" value="P/Q/R/S=409-426"/>
</dbReference>
<dbReference type="PDB" id="2AZE">
    <property type="method" value="X-ray"/>
    <property type="resolution" value="2.55 A"/>
    <property type="chains" value="B=200-301"/>
</dbReference>
<dbReference type="PDB" id="5M9N">
    <property type="method" value="X-ray"/>
    <property type="resolution" value="1.95 A"/>
    <property type="chains" value="C=104-120"/>
</dbReference>
<dbReference type="PDB" id="5M9O">
    <property type="method" value="X-ray"/>
    <property type="resolution" value="1.45 A"/>
    <property type="chains" value="B=108-116"/>
</dbReference>
<dbReference type="PDB" id="6G0P">
    <property type="method" value="X-ray"/>
    <property type="resolution" value="1.30 A"/>
    <property type="chains" value="B=114-129"/>
</dbReference>
<dbReference type="PDB" id="6ULS">
    <property type="method" value="X-ray"/>
    <property type="resolution" value="1.50 A"/>
    <property type="chains" value="B=114-123"/>
</dbReference>
<dbReference type="PDB" id="9CB3">
    <property type="method" value="EM"/>
    <property type="resolution" value="3.47 A"/>
    <property type="chains" value="C=84-96"/>
</dbReference>
<dbReference type="PDBsum" id="1H24"/>
<dbReference type="PDBsum" id="1O9K"/>
<dbReference type="PDBsum" id="2AZE"/>
<dbReference type="PDBsum" id="5M9N"/>
<dbReference type="PDBsum" id="5M9O"/>
<dbReference type="PDBsum" id="6G0P"/>
<dbReference type="PDBsum" id="6ULS"/>
<dbReference type="PDBsum" id="9CB3"/>
<dbReference type="EMDB" id="EMD-45413"/>
<dbReference type="SASBDB" id="Q01094"/>
<dbReference type="SMR" id="Q01094"/>
<dbReference type="BioGRID" id="108201">
    <property type="interactions" value="171"/>
</dbReference>
<dbReference type="ComplexPortal" id="CPX-155">
    <property type="entry name" value="RB1-E2F1-DP1 transcriptional repressor complex"/>
</dbReference>
<dbReference type="ComplexPortal" id="CPX-1971">
    <property type="entry name" value="E2F1-DP1 transcription factor complex"/>
</dbReference>
<dbReference type="CORUM" id="Q01094"/>
<dbReference type="DIP" id="DIP-24227N"/>
<dbReference type="ELM" id="Q01094"/>
<dbReference type="FunCoup" id="Q01094">
    <property type="interactions" value="3115"/>
</dbReference>
<dbReference type="IntAct" id="Q01094">
    <property type="interactions" value="113"/>
</dbReference>
<dbReference type="MINT" id="Q01094"/>
<dbReference type="STRING" id="9606.ENSP00000345571"/>
<dbReference type="ChEMBL" id="CHEMBL4382"/>
<dbReference type="GlyGen" id="Q01094">
    <property type="glycosylation" value="3 sites, 1 O-linked glycan (1 site)"/>
</dbReference>
<dbReference type="iPTMnet" id="Q01094"/>
<dbReference type="PhosphoSitePlus" id="Q01094"/>
<dbReference type="BioMuta" id="E2F1"/>
<dbReference type="DMDM" id="400928"/>
<dbReference type="jPOST" id="Q01094"/>
<dbReference type="MassIVE" id="Q01094"/>
<dbReference type="PaxDb" id="9606-ENSP00000345571"/>
<dbReference type="PeptideAtlas" id="Q01094"/>
<dbReference type="ProteomicsDB" id="57915"/>
<dbReference type="Antibodypedia" id="3771">
    <property type="antibodies" value="1449 antibodies from 47 providers"/>
</dbReference>
<dbReference type="DNASU" id="1869"/>
<dbReference type="Ensembl" id="ENST00000343380.6">
    <property type="protein sequence ID" value="ENSP00000345571.5"/>
    <property type="gene ID" value="ENSG00000101412.13"/>
</dbReference>
<dbReference type="GeneID" id="1869"/>
<dbReference type="KEGG" id="hsa:1869"/>
<dbReference type="MANE-Select" id="ENST00000343380.6">
    <property type="protein sequence ID" value="ENSP00000345571.5"/>
    <property type="RefSeq nucleotide sequence ID" value="NM_005225.3"/>
    <property type="RefSeq protein sequence ID" value="NP_005216.1"/>
</dbReference>
<dbReference type="UCSC" id="uc002wzu.5">
    <property type="organism name" value="human"/>
</dbReference>
<dbReference type="AGR" id="HGNC:3113"/>
<dbReference type="CTD" id="1869"/>
<dbReference type="DisGeNET" id="1869"/>
<dbReference type="GeneCards" id="E2F1"/>
<dbReference type="HGNC" id="HGNC:3113">
    <property type="gene designation" value="E2F1"/>
</dbReference>
<dbReference type="HPA" id="ENSG00000101412">
    <property type="expression patterns" value="Tissue enhanced (bone)"/>
</dbReference>
<dbReference type="MIM" id="189971">
    <property type="type" value="gene"/>
</dbReference>
<dbReference type="neXtProt" id="NX_Q01094"/>
<dbReference type="OpenTargets" id="ENSG00000101412"/>
<dbReference type="PharmGKB" id="PA152"/>
<dbReference type="VEuPathDB" id="HostDB:ENSG00000101412"/>
<dbReference type="eggNOG" id="KOG2577">
    <property type="taxonomic scope" value="Eukaryota"/>
</dbReference>
<dbReference type="GeneTree" id="ENSGT00940000159472"/>
<dbReference type="HOGENOM" id="CLU_032091_0_1_1"/>
<dbReference type="InParanoid" id="Q01094"/>
<dbReference type="OMA" id="HVMEQQI"/>
<dbReference type="OrthoDB" id="1743261at2759"/>
<dbReference type="PAN-GO" id="Q01094">
    <property type="GO annotations" value="5 GO annotations based on evolutionary models"/>
</dbReference>
<dbReference type="PhylomeDB" id="Q01094"/>
<dbReference type="TreeFam" id="TF105566"/>
<dbReference type="PathwayCommons" id="Q01094"/>
<dbReference type="Reactome" id="R-HSA-111448">
    <property type="pathway name" value="Activation of NOXA and translocation to mitochondria"/>
</dbReference>
<dbReference type="Reactome" id="R-HSA-113501">
    <property type="pathway name" value="Inhibition of replication initiation of damaged DNA by RB1/E2F1"/>
</dbReference>
<dbReference type="Reactome" id="R-HSA-1362277">
    <property type="pathway name" value="Transcription of E2F targets under negative control by DREAM complex"/>
</dbReference>
<dbReference type="Reactome" id="R-HSA-1362300">
    <property type="pathway name" value="Transcription of E2F targets under negative control by p107 (RBL1) and p130 (RBL2) in complex with HDAC1"/>
</dbReference>
<dbReference type="Reactome" id="R-HSA-139915">
    <property type="pathway name" value="Activation of PUMA and translocation to mitochondria"/>
</dbReference>
<dbReference type="Reactome" id="R-HSA-1912408">
    <property type="pathway name" value="Pre-NOTCH Transcription and Translation"/>
</dbReference>
<dbReference type="Reactome" id="R-HSA-2559580">
    <property type="pathway name" value="Oxidative Stress Induced Senescence"/>
</dbReference>
<dbReference type="Reactome" id="R-HSA-2559585">
    <property type="pathway name" value="Oncogene Induced Senescence"/>
</dbReference>
<dbReference type="Reactome" id="R-HSA-6804116">
    <property type="pathway name" value="TP53 Regulates Transcription of Genes Involved in G1 Cell Cycle Arrest"/>
</dbReference>
<dbReference type="Reactome" id="R-HSA-68911">
    <property type="pathway name" value="G2 Phase"/>
</dbReference>
<dbReference type="Reactome" id="R-HSA-69202">
    <property type="pathway name" value="Cyclin E associated events during G1/S transition"/>
</dbReference>
<dbReference type="Reactome" id="R-HSA-69205">
    <property type="pathway name" value="G1/S-Specific Transcription"/>
</dbReference>
<dbReference type="Reactome" id="R-HSA-69231">
    <property type="pathway name" value="Cyclin D associated events in G1"/>
</dbReference>
<dbReference type="Reactome" id="R-HSA-69656">
    <property type="pathway name" value="Cyclin A:Cdk2-associated events at S phase entry"/>
</dbReference>
<dbReference type="Reactome" id="R-HSA-8953750">
    <property type="pathway name" value="Transcriptional Regulation by E2F6"/>
</dbReference>
<dbReference type="Reactome" id="R-HSA-9616222">
    <property type="pathway name" value="Transcriptional regulation of granulopoiesis"/>
</dbReference>
<dbReference type="Reactome" id="R-HSA-9661069">
    <property type="pathway name" value="Defective binding of RB1 mutants to E2F1,(E2F2, E2F3)"/>
</dbReference>
<dbReference type="SignaLink" id="Q01094"/>
<dbReference type="SIGNOR" id="Q01094"/>
<dbReference type="BioGRID-ORCS" id="1869">
    <property type="hits" value="91 hits in 1191 CRISPR screens"/>
</dbReference>
<dbReference type="ChiTaRS" id="E2F1">
    <property type="organism name" value="human"/>
</dbReference>
<dbReference type="EvolutionaryTrace" id="Q01094"/>
<dbReference type="GeneWiki" id="E2F1"/>
<dbReference type="GenomeRNAi" id="1869"/>
<dbReference type="Pharos" id="Q01094">
    <property type="development level" value="Tbio"/>
</dbReference>
<dbReference type="PRO" id="PR:Q01094"/>
<dbReference type="Proteomes" id="UP000005640">
    <property type="component" value="Chromosome 20"/>
</dbReference>
<dbReference type="RNAct" id="Q01094">
    <property type="molecule type" value="protein"/>
</dbReference>
<dbReference type="Bgee" id="ENSG00000101412">
    <property type="expression patterns" value="Expressed in ganglionic eminence and 152 other cell types or tissues"/>
</dbReference>
<dbReference type="GO" id="GO:0005813">
    <property type="term" value="C:centrosome"/>
    <property type="evidence" value="ECO:0000314"/>
    <property type="project" value="HPA"/>
</dbReference>
<dbReference type="GO" id="GO:0000785">
    <property type="term" value="C:chromatin"/>
    <property type="evidence" value="ECO:0000314"/>
    <property type="project" value="BHF-UCL"/>
</dbReference>
<dbReference type="GO" id="GO:0005737">
    <property type="term" value="C:cytoplasm"/>
    <property type="evidence" value="ECO:0007669"/>
    <property type="project" value="Ensembl"/>
</dbReference>
<dbReference type="GO" id="GO:0000228">
    <property type="term" value="C:nuclear chromosome"/>
    <property type="evidence" value="ECO:0007669"/>
    <property type="project" value="Ensembl"/>
</dbReference>
<dbReference type="GO" id="GO:0005654">
    <property type="term" value="C:nucleoplasm"/>
    <property type="evidence" value="ECO:0000314"/>
    <property type="project" value="HPA"/>
</dbReference>
<dbReference type="GO" id="GO:0005634">
    <property type="term" value="C:nucleus"/>
    <property type="evidence" value="ECO:0000314"/>
    <property type="project" value="UniProtKB"/>
</dbReference>
<dbReference type="GO" id="GO:0032991">
    <property type="term" value="C:protein-containing complex"/>
    <property type="evidence" value="ECO:0000314"/>
    <property type="project" value="UniProtKB"/>
</dbReference>
<dbReference type="GO" id="GO:0035189">
    <property type="term" value="C:Rb-E2F complex"/>
    <property type="evidence" value="ECO:0000314"/>
    <property type="project" value="BHF-UCL"/>
</dbReference>
<dbReference type="GO" id="GO:0090575">
    <property type="term" value="C:RNA polymerase II transcription regulator complex"/>
    <property type="evidence" value="ECO:0000353"/>
    <property type="project" value="ComplexPortal"/>
</dbReference>
<dbReference type="GO" id="GO:0000987">
    <property type="term" value="F:cis-regulatory region sequence-specific DNA binding"/>
    <property type="evidence" value="ECO:0000314"/>
    <property type="project" value="UniProtKB"/>
</dbReference>
<dbReference type="GO" id="GO:0003677">
    <property type="term" value="F:DNA binding"/>
    <property type="evidence" value="ECO:0000314"/>
    <property type="project" value="UniProtKB"/>
</dbReference>
<dbReference type="GO" id="GO:0001216">
    <property type="term" value="F:DNA-binding transcription activator activity"/>
    <property type="evidence" value="ECO:0000314"/>
    <property type="project" value="UniProtKB"/>
</dbReference>
<dbReference type="GO" id="GO:0003700">
    <property type="term" value="F:DNA-binding transcription factor activity"/>
    <property type="evidence" value="ECO:0000314"/>
    <property type="project" value="UniProtKB"/>
</dbReference>
<dbReference type="GO" id="GO:0000981">
    <property type="term" value="F:DNA-binding transcription factor activity, RNA polymerase II-specific"/>
    <property type="evidence" value="ECO:0000315"/>
    <property type="project" value="UniProtKB"/>
</dbReference>
<dbReference type="GO" id="GO:0140297">
    <property type="term" value="F:DNA-binding transcription factor binding"/>
    <property type="evidence" value="ECO:0000353"/>
    <property type="project" value="UniProtKB"/>
</dbReference>
<dbReference type="GO" id="GO:0060090">
    <property type="term" value="F:molecular adaptor activity"/>
    <property type="evidence" value="ECO:0000269"/>
    <property type="project" value="DisProt"/>
</dbReference>
<dbReference type="GO" id="GO:0046983">
    <property type="term" value="F:protein dimerization activity"/>
    <property type="evidence" value="ECO:0007669"/>
    <property type="project" value="InterPro"/>
</dbReference>
<dbReference type="GO" id="GO:0019901">
    <property type="term" value="F:protein kinase binding"/>
    <property type="evidence" value="ECO:0007669"/>
    <property type="project" value="Ensembl"/>
</dbReference>
<dbReference type="GO" id="GO:0000978">
    <property type="term" value="F:RNA polymerase II cis-regulatory region sequence-specific DNA binding"/>
    <property type="evidence" value="ECO:0000318"/>
    <property type="project" value="GO_Central"/>
</dbReference>
<dbReference type="GO" id="GO:0043565">
    <property type="term" value="F:sequence-specific DNA binding"/>
    <property type="evidence" value="ECO:0000314"/>
    <property type="project" value="NTNU_SB"/>
</dbReference>
<dbReference type="GO" id="GO:1990837">
    <property type="term" value="F:sequence-specific double-stranded DNA binding"/>
    <property type="evidence" value="ECO:0000314"/>
    <property type="project" value="ARUK-UCL"/>
</dbReference>
<dbReference type="GO" id="GO:0043276">
    <property type="term" value="P:anoikis"/>
    <property type="evidence" value="ECO:0007669"/>
    <property type="project" value="Ensembl"/>
</dbReference>
<dbReference type="GO" id="GO:0071398">
    <property type="term" value="P:cellular response to fatty acid"/>
    <property type="evidence" value="ECO:0007669"/>
    <property type="project" value="Ensembl"/>
</dbReference>
<dbReference type="GO" id="GO:0071456">
    <property type="term" value="P:cellular response to hypoxia"/>
    <property type="evidence" value="ECO:0007669"/>
    <property type="project" value="Ensembl"/>
</dbReference>
<dbReference type="GO" id="GO:1990090">
    <property type="term" value="P:cellular response to nerve growth factor stimulus"/>
    <property type="evidence" value="ECO:0007669"/>
    <property type="project" value="Ensembl"/>
</dbReference>
<dbReference type="GO" id="GO:0071466">
    <property type="term" value="P:cellular response to xenobiotic stimulus"/>
    <property type="evidence" value="ECO:0007669"/>
    <property type="project" value="Ensembl"/>
</dbReference>
<dbReference type="GO" id="GO:0000077">
    <property type="term" value="P:DNA damage checkpoint signaling"/>
    <property type="evidence" value="ECO:0000315"/>
    <property type="project" value="UniProtKB"/>
</dbReference>
<dbReference type="GO" id="GO:0006351">
    <property type="term" value="P:DNA-templated transcription"/>
    <property type="evidence" value="ECO:0000250"/>
    <property type="project" value="UniProtKB"/>
</dbReference>
<dbReference type="GO" id="GO:0030900">
    <property type="term" value="P:forebrain development"/>
    <property type="evidence" value="ECO:0007669"/>
    <property type="project" value="Ensembl"/>
</dbReference>
<dbReference type="GO" id="GO:0072332">
    <property type="term" value="P:intrinsic apoptotic signaling pathway by p53 class mediator"/>
    <property type="evidence" value="ECO:0007669"/>
    <property type="project" value="Ensembl"/>
</dbReference>
<dbReference type="GO" id="GO:0008630">
    <property type="term" value="P:intrinsic apoptotic signaling pathway in response to DNA damage"/>
    <property type="evidence" value="ECO:0000315"/>
    <property type="project" value="UniProtKB"/>
</dbReference>
<dbReference type="GO" id="GO:1990086">
    <property type="term" value="P:lens fiber cell apoptotic process"/>
    <property type="evidence" value="ECO:0007669"/>
    <property type="project" value="Ensembl"/>
</dbReference>
<dbReference type="GO" id="GO:0048255">
    <property type="term" value="P:mRNA stabilization"/>
    <property type="evidence" value="ECO:0000314"/>
    <property type="project" value="BHF-UCL"/>
</dbReference>
<dbReference type="GO" id="GO:0043392">
    <property type="term" value="P:negative regulation of DNA binding"/>
    <property type="evidence" value="ECO:0000314"/>
    <property type="project" value="UniProtKB"/>
</dbReference>
<dbReference type="GO" id="GO:0045892">
    <property type="term" value="P:negative regulation of DNA-templated transcription"/>
    <property type="evidence" value="ECO:0000314"/>
    <property type="project" value="UniProtKB"/>
</dbReference>
<dbReference type="GO" id="GO:0045599">
    <property type="term" value="P:negative regulation of fat cell differentiation"/>
    <property type="evidence" value="ECO:0000250"/>
    <property type="project" value="UniProtKB"/>
</dbReference>
<dbReference type="GO" id="GO:0070345">
    <property type="term" value="P:negative regulation of fat cell proliferation"/>
    <property type="evidence" value="ECO:0000250"/>
    <property type="project" value="UniProtKB"/>
</dbReference>
<dbReference type="GO" id="GO:0000122">
    <property type="term" value="P:negative regulation of transcription by RNA polymerase II"/>
    <property type="evidence" value="ECO:0000315"/>
    <property type="project" value="BHF-UCL"/>
</dbReference>
<dbReference type="GO" id="GO:0043065">
    <property type="term" value="P:positive regulation of apoptotic process"/>
    <property type="evidence" value="ECO:0000314"/>
    <property type="project" value="UniProtKB"/>
</dbReference>
<dbReference type="GO" id="GO:0045893">
    <property type="term" value="P:positive regulation of DNA-templated transcription"/>
    <property type="evidence" value="ECO:0000314"/>
    <property type="project" value="BHF-UCL"/>
</dbReference>
<dbReference type="GO" id="GO:0048146">
    <property type="term" value="P:positive regulation of fibroblast proliferation"/>
    <property type="evidence" value="ECO:0000315"/>
    <property type="project" value="BHF-UCL"/>
</dbReference>
<dbReference type="GO" id="GO:0010628">
    <property type="term" value="P:positive regulation of gene expression"/>
    <property type="evidence" value="ECO:0000314"/>
    <property type="project" value="BHF-UCL"/>
</dbReference>
<dbReference type="GO" id="GO:0060252">
    <property type="term" value="P:positive regulation of glial cell proliferation"/>
    <property type="evidence" value="ECO:0007669"/>
    <property type="project" value="Ensembl"/>
</dbReference>
<dbReference type="GO" id="GO:0045944">
    <property type="term" value="P:positive regulation of transcription by RNA polymerase II"/>
    <property type="evidence" value="ECO:0000314"/>
    <property type="project" value="UniProtKB"/>
</dbReference>
<dbReference type="GO" id="GO:0006355">
    <property type="term" value="P:regulation of DNA-templated transcription"/>
    <property type="evidence" value="ECO:0000314"/>
    <property type="project" value="UniProtKB"/>
</dbReference>
<dbReference type="GO" id="GO:2000045">
    <property type="term" value="P:regulation of G1/S transition of mitotic cell cycle"/>
    <property type="evidence" value="ECO:0000315"/>
    <property type="project" value="BHF-UCL"/>
</dbReference>
<dbReference type="GO" id="GO:0006357">
    <property type="term" value="P:regulation of transcription by RNA polymerase II"/>
    <property type="evidence" value="ECO:0000318"/>
    <property type="project" value="GO_Central"/>
</dbReference>
<dbReference type="GO" id="GO:0032496">
    <property type="term" value="P:response to lipopolysaccharide"/>
    <property type="evidence" value="ECO:0007669"/>
    <property type="project" value="Ensembl"/>
</dbReference>
<dbReference type="GO" id="GO:0007283">
    <property type="term" value="P:spermatogenesis"/>
    <property type="evidence" value="ECO:0007669"/>
    <property type="project" value="Ensembl"/>
</dbReference>
<dbReference type="CDD" id="cd14660">
    <property type="entry name" value="E2F_DD"/>
    <property type="match status" value="1"/>
</dbReference>
<dbReference type="DisProt" id="DP01427"/>
<dbReference type="FunFam" id="1.10.10.10:FF:000008">
    <property type="entry name" value="E2F transcription factor 1"/>
    <property type="match status" value="1"/>
</dbReference>
<dbReference type="Gene3D" id="6.10.250.540">
    <property type="match status" value="1"/>
</dbReference>
<dbReference type="Gene3D" id="1.10.10.10">
    <property type="entry name" value="Winged helix-like DNA-binding domain superfamily/Winged helix DNA-binding domain"/>
    <property type="match status" value="1"/>
</dbReference>
<dbReference type="IDEAL" id="IID00064"/>
<dbReference type="InterPro" id="IPR015633">
    <property type="entry name" value="E2F"/>
</dbReference>
<dbReference type="InterPro" id="IPR037241">
    <property type="entry name" value="E2F-DP_heterodim"/>
</dbReference>
<dbReference type="InterPro" id="IPR032198">
    <property type="entry name" value="E2F_CC-MB"/>
</dbReference>
<dbReference type="InterPro" id="IPR003316">
    <property type="entry name" value="E2F_WHTH_DNA-bd_dom"/>
</dbReference>
<dbReference type="InterPro" id="IPR036388">
    <property type="entry name" value="WH-like_DNA-bd_sf"/>
</dbReference>
<dbReference type="InterPro" id="IPR036390">
    <property type="entry name" value="WH_DNA-bd_sf"/>
</dbReference>
<dbReference type="PANTHER" id="PTHR12081">
    <property type="entry name" value="TRANSCRIPTION FACTOR E2F"/>
    <property type="match status" value="1"/>
</dbReference>
<dbReference type="PANTHER" id="PTHR12081:SF43">
    <property type="entry name" value="TRANSCRIPTION FACTOR E2F1"/>
    <property type="match status" value="1"/>
</dbReference>
<dbReference type="Pfam" id="PF16421">
    <property type="entry name" value="E2F_CC-MB"/>
    <property type="match status" value="1"/>
</dbReference>
<dbReference type="Pfam" id="PF02319">
    <property type="entry name" value="E2F_TDP"/>
    <property type="match status" value="1"/>
</dbReference>
<dbReference type="SMART" id="SM01372">
    <property type="entry name" value="E2F_TDP"/>
    <property type="match status" value="1"/>
</dbReference>
<dbReference type="SUPFAM" id="SSF144074">
    <property type="entry name" value="E2F-DP heterodimerization region"/>
    <property type="match status" value="1"/>
</dbReference>
<dbReference type="SUPFAM" id="SSF46785">
    <property type="entry name" value="Winged helix' DNA-binding domain"/>
    <property type="match status" value="1"/>
</dbReference>
<reference key="1">
    <citation type="journal article" date="1992" name="Cell">
        <title>A cDNA encoding a pRB-binding protein with properties of the transcription factor E2F.</title>
        <authorList>
            <person name="Helin K."/>
            <person name="Lees J.A."/>
            <person name="Vidal M."/>
            <person name="Dyson N.J."/>
            <person name="Harlow E."/>
            <person name="Fattaey A."/>
        </authorList>
    </citation>
    <scope>NUCLEOTIDE SEQUENCE [MRNA]</scope>
</reference>
<reference key="2">
    <citation type="journal article" date="1992" name="Cell">
        <title>Expression cloning of a cDNA encoding a retinoblastoma-binding protein with E2F-like properties.</title>
        <authorList>
            <person name="Kaelin W.G. Jr."/>
            <person name="Krek W."/>
            <person name="Sellers W.R."/>
            <person name="Decaprio J.A."/>
            <person name="Ajchenbaum F."/>
            <person name="Fuchs C.S."/>
            <person name="Chittenden T."/>
            <person name="Li Y."/>
            <person name="Farnham P.J."/>
            <person name="Blanar M.A."/>
            <person name="Livingston D.M."/>
            <person name="Flemington E.K."/>
        </authorList>
    </citation>
    <scope>NUCLEOTIDE SEQUENCE [MRNA]</scope>
</reference>
<reference key="3">
    <citation type="journal article" date="1992" name="Mol. Cell. Biol.">
        <title>Molecular cloning of cellular genes encoding retinoblastoma-associated proteins: identification of a gene with properties of the transcription factor E2F.</title>
        <authorList>
            <person name="Shan B."/>
            <person name="Zhu X."/>
            <person name="Chen P.L."/>
            <person name="Durfee T."/>
            <person name="Yang Y."/>
            <person name="Sharp D."/>
            <person name="Lee W.H."/>
        </authorList>
    </citation>
    <scope>NUCLEOTIDE SEQUENCE [MRNA]</scope>
</reference>
<reference key="4">
    <citation type="journal article" date="1996" name="Gene">
        <title>Structure and partial genomic sequence of the human E2F1 gene.</title>
        <authorList>
            <person name="Neuman E."/>
            <person name="Sellers W.R.S."/>
            <person name="McNeil J.A."/>
            <person name="Lawrence J.B."/>
            <person name="Kaelin W.G. Jr."/>
        </authorList>
    </citation>
    <scope>NUCLEOTIDE SEQUENCE [GENOMIC DNA]</scope>
</reference>
<reference key="5">
    <citation type="submission" date="2002-05" db="EMBL/GenBank/DDBJ databases">
        <authorList>
            <consortium name="NIEHS SNPs program"/>
        </authorList>
    </citation>
    <scope>NUCLEOTIDE SEQUENCE [GENOMIC DNA]</scope>
    <scope>VARIANTS HIS-252; MET-276; ASN-311 AND SER-393</scope>
</reference>
<reference key="6">
    <citation type="journal article" date="2001" name="Nature">
        <title>The DNA sequence and comparative analysis of human chromosome 20.</title>
        <authorList>
            <person name="Deloukas P."/>
            <person name="Matthews L.H."/>
            <person name="Ashurst J.L."/>
            <person name="Burton J."/>
            <person name="Gilbert J.G.R."/>
            <person name="Jones M."/>
            <person name="Stavrides G."/>
            <person name="Almeida J.P."/>
            <person name="Babbage A.K."/>
            <person name="Bagguley C.L."/>
            <person name="Bailey J."/>
            <person name="Barlow K.F."/>
            <person name="Bates K.N."/>
            <person name="Beard L.M."/>
            <person name="Beare D.M."/>
            <person name="Beasley O.P."/>
            <person name="Bird C.P."/>
            <person name="Blakey S.E."/>
            <person name="Bridgeman A.M."/>
            <person name="Brown A.J."/>
            <person name="Buck D."/>
            <person name="Burrill W.D."/>
            <person name="Butler A.P."/>
            <person name="Carder C."/>
            <person name="Carter N.P."/>
            <person name="Chapman J.C."/>
            <person name="Clamp M."/>
            <person name="Clark G."/>
            <person name="Clark L.N."/>
            <person name="Clark S.Y."/>
            <person name="Clee C.M."/>
            <person name="Clegg S."/>
            <person name="Cobley V.E."/>
            <person name="Collier R.E."/>
            <person name="Connor R.E."/>
            <person name="Corby N.R."/>
            <person name="Coulson A."/>
            <person name="Coville G.J."/>
            <person name="Deadman R."/>
            <person name="Dhami P.D."/>
            <person name="Dunn M."/>
            <person name="Ellington A.G."/>
            <person name="Frankland J.A."/>
            <person name="Fraser A."/>
            <person name="French L."/>
            <person name="Garner P."/>
            <person name="Grafham D.V."/>
            <person name="Griffiths C."/>
            <person name="Griffiths M.N.D."/>
            <person name="Gwilliam R."/>
            <person name="Hall R.E."/>
            <person name="Hammond S."/>
            <person name="Harley J.L."/>
            <person name="Heath P.D."/>
            <person name="Ho S."/>
            <person name="Holden J.L."/>
            <person name="Howden P.J."/>
            <person name="Huckle E."/>
            <person name="Hunt A.R."/>
            <person name="Hunt S.E."/>
            <person name="Jekosch K."/>
            <person name="Johnson C.M."/>
            <person name="Johnson D."/>
            <person name="Kay M.P."/>
            <person name="Kimberley A.M."/>
            <person name="King A."/>
            <person name="Knights A."/>
            <person name="Laird G.K."/>
            <person name="Lawlor S."/>
            <person name="Lehvaeslaiho M.H."/>
            <person name="Leversha M.A."/>
            <person name="Lloyd C."/>
            <person name="Lloyd D.M."/>
            <person name="Lovell J.D."/>
            <person name="Marsh V.L."/>
            <person name="Martin S.L."/>
            <person name="McConnachie L.J."/>
            <person name="McLay K."/>
            <person name="McMurray A.A."/>
            <person name="Milne S.A."/>
            <person name="Mistry D."/>
            <person name="Moore M.J.F."/>
            <person name="Mullikin J.C."/>
            <person name="Nickerson T."/>
            <person name="Oliver K."/>
            <person name="Parker A."/>
            <person name="Patel R."/>
            <person name="Pearce T.A.V."/>
            <person name="Peck A.I."/>
            <person name="Phillimore B.J.C.T."/>
            <person name="Prathalingam S.R."/>
            <person name="Plumb R.W."/>
            <person name="Ramsay H."/>
            <person name="Rice C.M."/>
            <person name="Ross M.T."/>
            <person name="Scott C.E."/>
            <person name="Sehra H.K."/>
            <person name="Shownkeen R."/>
            <person name="Sims S."/>
            <person name="Skuce C.D."/>
            <person name="Smith M.L."/>
            <person name="Soderlund C."/>
            <person name="Steward C.A."/>
            <person name="Sulston J.E."/>
            <person name="Swann R.M."/>
            <person name="Sycamore N."/>
            <person name="Taylor R."/>
            <person name="Tee L."/>
            <person name="Thomas D.W."/>
            <person name="Thorpe A."/>
            <person name="Tracey A."/>
            <person name="Tromans A.C."/>
            <person name="Vaudin M."/>
            <person name="Wall M."/>
            <person name="Wallis J.M."/>
            <person name="Whitehead S.L."/>
            <person name="Whittaker P."/>
            <person name="Willey D.L."/>
            <person name="Williams L."/>
            <person name="Williams S.A."/>
            <person name="Wilming L."/>
            <person name="Wray P.W."/>
            <person name="Hubbard T."/>
            <person name="Durbin R.M."/>
            <person name="Bentley D.R."/>
            <person name="Beck S."/>
            <person name="Rogers J."/>
        </authorList>
    </citation>
    <scope>NUCLEOTIDE SEQUENCE [LARGE SCALE GENOMIC DNA]</scope>
</reference>
<reference key="7">
    <citation type="journal article" date="2004" name="Genome Res.">
        <title>The status, quality, and expansion of the NIH full-length cDNA project: the Mammalian Gene Collection (MGC).</title>
        <authorList>
            <consortium name="The MGC Project Team"/>
        </authorList>
    </citation>
    <scope>NUCLEOTIDE SEQUENCE [LARGE SCALE MRNA]</scope>
    <source>
        <tissue>Pancreas</tissue>
        <tissue>Skin</tissue>
    </source>
</reference>
<reference key="8">
    <citation type="journal article" date="1994" name="Genes Dev.">
        <title>Autoregulatory control of E2F1 expression in response to positive and negative regulators of cell cycle progression.</title>
        <authorList>
            <person name="Johnson D.G."/>
            <person name="Ohtani K."/>
            <person name="Nevins J.R."/>
        </authorList>
    </citation>
    <scope>NUCLEOTIDE SEQUENCE [GENOMIC DNA] OF 1-111</scope>
</reference>
<reference key="9">
    <citation type="journal article" date="1993" name="Mol. Cell. Biol.">
        <title>A bipartite nuclear localization signal in the retinoblastoma gene product and its importance for biological activity.</title>
        <authorList>
            <person name="Zacksenhaus E."/>
            <person name="Bremner R."/>
            <person name="Phillips R.A."/>
            <person name="Gallie B.L."/>
        </authorList>
    </citation>
    <scope>INTERACTION WITH RB1</scope>
</reference>
<reference key="10">
    <citation type="journal article" date="1993" name="Mol. Cell. Biol.">
        <title>Inhibition of E2F-1 transactivation by direct binding of the retinoblastoma protein.</title>
        <authorList>
            <person name="Helin K."/>
            <person name="Harlow E."/>
            <person name="Fattaey A."/>
        </authorList>
    </citation>
    <scope>TRANSACTIVATION INHIBITION</scope>
    <scope>MUTAGENESIS OF TYR-411</scope>
</reference>
<reference key="11">
    <citation type="journal article" date="1994" name="Cell">
        <title>Negative regulation of the growth-promoting transcription factor E2F-1 by a stably bound cyclin A-dependent protein kinase.</title>
        <authorList>
            <person name="Krek W."/>
            <person name="Ewen M.E."/>
            <person name="Shirodkar S."/>
            <person name="Arany Z."/>
            <person name="Kaelin W.G. Jr."/>
            <person name="Livingston D.M."/>
        </authorList>
    </citation>
    <scope>DOMAIN CYCLIN A:CDK2 BINDING</scope>
</reference>
<reference key="12">
    <citation type="journal article" date="1994" name="Genes Dev.">
        <title>Differential regulation of E2F transactivation by cyclin/cdk2 complexes.</title>
        <authorList>
            <person name="Dynlacht B.D."/>
            <person name="Flores O."/>
            <person name="Lees J.A."/>
            <person name="Harlow E."/>
        </authorList>
    </citation>
    <scope>DIFFERENTIAL REGULATION BY CYCLIN/CDK2 KINASES</scope>
</reference>
<reference key="13">
    <citation type="journal article" date="1994" name="Mol. Cell. Biol.">
        <title>Cyclin A/CDK2 binds directly to E2F-1 and inhibits the DNA-binding activity of E2F-1/DP-1 by phosphorylation.</title>
        <authorList>
            <person name="Xu M."/>
            <person name="Sheppard K.-A."/>
            <person name="Peng C.-Y."/>
            <person name="Yee A.S."/>
            <person name="Piwnica-Worms H."/>
        </authorList>
    </citation>
    <scope>INHIBITION OF DNA-BINDING</scope>
</reference>
<reference key="14">
    <citation type="journal article" date="1994" name="Proc. Natl. Acad. Sci. U.S.A.">
        <title>P53 and E2F-1 cooperate to mediate apoptosis.</title>
        <authorList>
            <person name="Wu X."/>
            <person name="Levine A.J."/>
        </authorList>
    </citation>
    <scope>FUNCTION IN APOPTOSIS</scope>
</reference>
<reference key="15">
    <citation type="journal article" date="1995" name="J. Virol.">
        <title>Interaction of the 72-kilodalton human cytomegalovirus IE1 gene product with E2F1 coincides with E2F-dependent activation of dihydrofolate reductase transcription.</title>
        <authorList>
            <person name="Margolis M.J."/>
            <person name="Pajovic S."/>
            <person name="Wong E.L."/>
            <person name="Wade M."/>
            <person name="Jupp R."/>
            <person name="Nelson J.A."/>
            <person name="Azizkhan J.C."/>
        </authorList>
    </citation>
    <scope>INTERACTION WITH HHV-5 PROTEIN UL123</scope>
</reference>
<reference key="16">
    <citation type="journal article" date="1995" name="Oncogene">
        <title>Phosphorylation of E2F-1 by cyclin A-cdk2.</title>
        <authorList>
            <person name="Kitagawa M."/>
            <person name="Higashi H."/>
            <person name="Suzuki-Takahashi I."/>
            <person name="Segawa K."/>
            <person name="Hanks S.K."/>
            <person name="Taya Y."/>
            <person name="Nishimura S."/>
            <person name="Okuyama A."/>
        </authorList>
    </citation>
    <scope>PHOSPHORYLATION</scope>
</reference>
<reference key="17">
    <citation type="journal article" date="1997" name="Mol. Cell. Biol.">
        <title>Specific regulation of E2F family members by cyclin-dependent kinases.</title>
        <authorList>
            <person name="Dynlacht B.D."/>
            <person name="Moberg K."/>
            <person name="Lees J.A."/>
            <person name="Harlow E."/>
            <person name="Zhu L."/>
        </authorList>
    </citation>
    <scope>REGULATION BY CYCLIN-DEPENDENT KINASES</scope>
</reference>
<reference key="18">
    <citation type="journal article" date="1998" name="Oncogene">
        <title>A novel E2F binding protein with Myc-type HLH motif stimulates E2F-dependent transcription by forming a heterodimer.</title>
        <authorList>
            <person name="Suzuki M."/>
            <person name="Okuyama S."/>
            <person name="Okamoto S."/>
            <person name="Shirasuna K."/>
            <person name="Nakajima T."/>
            <person name="Hachiya T."/>
            <person name="Nojima H."/>
            <person name="Sekiya S."/>
            <person name="Oda K."/>
        </authorList>
    </citation>
    <scope>INTERACTION WITH ARID3A</scope>
</reference>
<reference key="19">
    <citation type="journal article" date="2000" name="EMBO J.">
        <title>Regulation of E2F1 activity by acetylation.</title>
        <authorList>
            <person name="Martinez-Balbas M.A."/>
            <person name="Bauer U.M."/>
            <person name="Nielsen S.J."/>
            <person name="Brehm A."/>
            <person name="Kouzarides T."/>
        </authorList>
    </citation>
    <scope>ACETYLATION AT LYS-117; LYS-120 AND LYS-125</scope>
    <scope>DNA-BINDING</scope>
    <scope>INTERACTION WITH KAT2B</scope>
    <scope>FUNCTION</scope>
    <scope>MUTAGENESIS OF LYS-117; LYS-120 AND LYS-125</scope>
</reference>
<reference key="20">
    <citation type="journal article" date="2001" name="J. Biol. Chem.">
        <title>E2F transcriptional activation requires TRRAP and GCN5 cofactors.</title>
        <authorList>
            <person name="Lang S.E."/>
            <person name="McMahon S.B."/>
            <person name="Cole M.D."/>
            <person name="Hearing P."/>
        </authorList>
    </citation>
    <scope>INTERACTION WITH TRRAP</scope>
</reference>
<reference key="21">
    <citation type="journal article" date="2003" name="Mol. Cell. Biol.">
        <title>Regulation of E2F1 by BRCT domain-containing protein TopBP1.</title>
        <authorList>
            <person name="Liu K."/>
            <person name="Lin F.-T."/>
            <person name="Ruppert J.M."/>
            <person name="Lin W.-C."/>
        </authorList>
    </citation>
    <scope>INTERACTION WITH TOPBP1</scope>
</reference>
<reference key="22">
    <citation type="journal article" date="2003" name="Nat. Cell Biol.">
        <title>Chk2 activates E2F-1 in response to DNA damage.</title>
        <authorList>
            <person name="Stevens C."/>
            <person name="Smith L."/>
            <person name="La Thangue N.B."/>
        </authorList>
    </citation>
    <scope>FUNCTION IN TRANSCRIPTION REGULATION</scope>
    <scope>FUNCTION IN APOPTOSIS</scope>
    <scope>PHOSPHORYLATION AT SER-364 BY CHEK2</scope>
    <scope>MUTAGENESIS OF SER-364</scope>
</reference>
<reference key="23">
    <citation type="journal article" date="2005" name="Cell">
        <title>Structure of the Rb C-terminal domain bound to E2F1-DP1: a mechanism for phosphorylation-induced E2F release.</title>
        <authorList>
            <person name="Rubin S.M."/>
            <person name="Gall A.-L."/>
            <person name="Zheng N."/>
            <person name="Pavletich N.P."/>
        </authorList>
    </citation>
    <scope>INTERACTION WITH RB1 AND TFDP1</scope>
</reference>
<reference key="24">
    <citation type="journal article" date="2005" name="Mol. Biol. Cell">
        <title>EAPP, a novel E2F binding protein that modulates E2F-dependent transcription.</title>
        <authorList>
            <person name="Novy M."/>
            <person name="Pohn R."/>
            <person name="Andorfer P."/>
            <person name="Novy-Weiland T."/>
            <person name="Galos B."/>
            <person name="Schwarzmayr L."/>
            <person name="Rotheneder H."/>
        </authorList>
    </citation>
    <scope>INTERACTION WITH EAPP</scope>
</reference>
<reference key="25">
    <citation type="journal article" date="2006" name="Cell">
        <title>Global, in vivo, and site-specific phosphorylation dynamics in signaling networks.</title>
        <authorList>
            <person name="Olsen J.V."/>
            <person name="Blagoev B."/>
            <person name="Gnad F."/>
            <person name="Macek B."/>
            <person name="Kumar C."/>
            <person name="Mortensen P."/>
            <person name="Mann M."/>
        </authorList>
    </citation>
    <scope>PHOSPHORYLATION [LARGE SCALE ANALYSIS] AT SER-375</scope>
    <scope>IDENTIFICATION BY MASS SPECTROMETRY [LARGE SCALE ANALYSIS]</scope>
    <source>
        <tissue>Cervix carcinoma</tissue>
    </source>
</reference>
<reference key="26">
    <citation type="journal article" date="2007" name="Biochim. Biophys. Acta">
        <title>Glycogen synthase kinase-3beta binds to E2F1 and regulates its transcriptional activity.</title>
        <authorList>
            <person name="Garcia-Alvarez G."/>
            <person name="Ventura V."/>
            <person name="Ros O."/>
            <person name="Aligue R."/>
            <person name="Gil J."/>
            <person name="Tauler A."/>
        </authorList>
    </citation>
    <scope>FUNCTION</scope>
    <scope>PHOSPHORYLATION AT SER-403 AND THR-433</scope>
    <scope>MUTAGENESIS OF SER-403 AND THR-433</scope>
</reference>
<reference key="27">
    <citation type="journal article" date="2007" name="J. Biol. Chem.">
        <title>Regulation of E2F1 function by the nuclear corepressor KAP1.</title>
        <authorList>
            <person name="Wang C."/>
            <person name="Rauscher F.J. III"/>
            <person name="Cress W.D."/>
            <person name="Chen J."/>
        </authorList>
    </citation>
    <scope>INTERACTION WITH HDAC1 AND TRIM28</scope>
    <scope>FUNCTION</scope>
    <scope>ACETYLATION</scope>
    <scope>DEACETYLATION</scope>
</reference>
<reference key="28">
    <citation type="journal article" date="2008" name="FEBS Lett.">
        <title>PEG10 directly regulated by E2Fs might have a role in the development of hepatocellular carcinoma.</title>
        <authorList>
            <person name="Wang C."/>
            <person name="Xiao Y."/>
            <person name="Hu Z."/>
            <person name="Chen Y."/>
            <person name="Liu N."/>
            <person name="Hu G."/>
        </authorList>
    </citation>
    <scope>FUNCTION</scope>
</reference>
<reference key="29">
    <citation type="journal article" date="2008" name="Proc. Natl. Acad. Sci. U.S.A.">
        <title>A quantitative atlas of mitotic phosphorylation.</title>
        <authorList>
            <person name="Dephoure N."/>
            <person name="Zhou C."/>
            <person name="Villen J."/>
            <person name="Beausoleil S.A."/>
            <person name="Bakalarski C.E."/>
            <person name="Elledge S.J."/>
            <person name="Gygi S.P."/>
        </authorList>
    </citation>
    <scope>PHOSPHORYLATION [LARGE SCALE ANALYSIS] AT SER-375</scope>
    <scope>IDENTIFICATION BY MASS SPECTROMETRY [LARGE SCALE ANALYSIS]</scope>
    <source>
        <tissue>Cervix carcinoma</tissue>
    </source>
</reference>
<reference key="30">
    <citation type="journal article" date="2009" name="Sci. Signal.">
        <title>Quantitative phosphoproteomic analysis of T cell receptor signaling reveals system-wide modulation of protein-protein interactions.</title>
        <authorList>
            <person name="Mayya V."/>
            <person name="Lundgren D.H."/>
            <person name="Hwang S.-I."/>
            <person name="Rezaul K."/>
            <person name="Wu L."/>
            <person name="Eng J.K."/>
            <person name="Rodionov V."/>
            <person name="Han D.K."/>
        </authorList>
    </citation>
    <scope>PHOSPHORYLATION [LARGE SCALE ANALYSIS] AT SER-375</scope>
    <scope>IDENTIFICATION BY MASS SPECTROMETRY [LARGE SCALE ANALYSIS]</scope>
    <source>
        <tissue>Leukemic T-cell</tissue>
    </source>
</reference>
<reference key="31">
    <citation type="journal article" date="2010" name="J. Biol. Chem.">
        <title>Regulation of E2F1-induced apoptosis by the nucleolar protein RRP1B.</title>
        <authorList>
            <person name="Paik J.C."/>
            <person name="Wang B."/>
            <person name="Liu K."/>
            <person name="Lue J.K."/>
            <person name="Lin W.C."/>
        </authorList>
    </citation>
    <scope>FUNCTION</scope>
    <scope>SUBCELLULAR LOCATION</scope>
    <scope>INTERACTION WITH RRP1B</scope>
</reference>
<reference key="32">
    <citation type="journal article" date="2010" name="Mol. Cell. Biol.">
        <title>Repression of transcriptional activity of C/EBPalpha by E2F-dimerization partner complexes.</title>
        <authorList>
            <person name="Zaragoza K."/>
            <person name="Begay V."/>
            <person name="Schuetz A."/>
            <person name="Heinemann U."/>
            <person name="Leutz A."/>
        </authorList>
    </citation>
    <scope>FUNCTION</scope>
    <scope>INTERACTION WITH CEBPA</scope>
    <scope>MUTAGENESIS OF LEU-132 AND TYR-411</scope>
</reference>
<reference key="33">
    <citation type="journal article" date="2010" name="Mol. Cell">
        <title>Lysine methylation regulates E2F1-induced cell death.</title>
        <authorList>
            <person name="Kontaki H."/>
            <person name="Talianidis I."/>
        </authorList>
    </citation>
    <scope>METHYLATION AT LYS-185</scope>
    <scope>MUTAGENESIS OF LYS-185</scope>
</reference>
<reference key="34">
    <citation type="journal article" date="2011" name="J. Biol. Chem.">
        <title>Cellular inhibitor of apoptosis protein-1 (cIAP1) can regulate E2F1 transcription factor-mediated control of cyclin transcription.</title>
        <authorList>
            <person name="Cartier J."/>
            <person name="Berthelet J."/>
            <person name="Marivin A."/>
            <person name="Gemble S."/>
            <person name="Edmond V."/>
            <person name="Plenchette S."/>
            <person name="Lagrange B."/>
            <person name="Hammann A."/>
            <person name="Dupoux A."/>
            <person name="Delva L."/>
            <person name="Eymin B."/>
            <person name="Solary E."/>
            <person name="Dubrez L."/>
        </authorList>
    </citation>
    <scope>INTERACTION WITH BIRC2</scope>
    <scope>ACTIVITY REGULATION</scope>
</reference>
<reference key="35">
    <citation type="journal article" date="2013" name="J. Biol. Chem.">
        <title>Mixed lineage leukemia 5 (MLL5) protein regulates cell cycle progression and E2F1-responsive gene expression via association with host cell factor-1 (HCF-1).</title>
        <authorList>
            <person name="Zhou P."/>
            <person name="Wang Z."/>
            <person name="Yuan X."/>
            <person name="Zhou C."/>
            <person name="Liu L."/>
            <person name="Wan X."/>
            <person name="Zhang F."/>
            <person name="Ding X."/>
            <person name="Wang C."/>
            <person name="Xiong S."/>
            <person name="Wang Z."/>
            <person name="Yuan J."/>
            <person name="Li Q."/>
            <person name="Zhang Y."/>
        </authorList>
    </citation>
    <scope>INTERACTION WITH KMT2E AND HCFC1</scope>
</reference>
<reference key="36">
    <citation type="journal article" date="2018" name="J. Mol. Cell Biol.">
        <title>Phosphorylated E2F1 is stabilized by nuclear USP11 to drive Peg10 gene expression and activate lung epithelial cells.</title>
        <authorList>
            <person name="Wang D."/>
            <person name="Zhao J."/>
            <person name="Li S."/>
            <person name="Wei J."/>
            <person name="Nan L."/>
            <person name="Mallampalli R.K."/>
            <person name="Weathington N.M."/>
            <person name="Ma H."/>
            <person name="Zhao Y."/>
        </authorList>
    </citation>
    <scope>FUNCTION</scope>
    <scope>SUBCELLULAR LOCATION</scope>
    <scope>UBIQUITINATION</scope>
    <scope>DEUBIQUITINATION</scope>
    <scope>PHOSPHORYLATION AT SER-403</scope>
    <scope>MUTAGENESIS OF SER-403</scope>
</reference>
<reference key="37">
    <citation type="journal article" date="2018" name="Nat. Commun.">
        <title>Methylated DNMT1 and E2F1 are targeted for proteolysis by L3MBTL3 and CRL4-DCAF5 ubiquitin ligase.</title>
        <authorList>
            <person name="Leng F."/>
            <person name="Yu J."/>
            <person name="Zhang C."/>
            <person name="Alejo S."/>
            <person name="Hoang N."/>
            <person name="Sun H."/>
            <person name="Lu F."/>
            <person name="Zhang H."/>
        </authorList>
    </citation>
    <scope>INTERACTION WITH DCAF5 AND L3MBTL3</scope>
    <scope>MUTAGENESIS OF LYS-185</scope>
</reference>
<reference key="38">
    <citation type="journal article" date="2002" name="Biochemistry">
        <title>Specificity determinants of recruitment peptides bound to phospho-CDK2/cyclin A.</title>
        <authorList>
            <person name="Lowe E.D."/>
            <person name="Tews I."/>
            <person name="Cheng K.Y."/>
            <person name="Brown N.R."/>
            <person name="Gul S."/>
            <person name="Noble M.E.M."/>
            <person name="Gamblin S.J."/>
            <person name="Johnson L.N."/>
        </authorList>
    </citation>
    <scope>X-RAY CRYSTALLOGRAPHY (2.5 ANGSTROMS) OF 87-95</scope>
</reference>
<reference key="39">
    <citation type="journal article" date="2003" name="Proc. Natl. Acad. Sci. U.S.A.">
        <title>Crystal structure of the retinoblastoma tumor suppressor protein bound to E2F and the molecular basis of its regulation.</title>
        <authorList>
            <person name="Xiao B."/>
            <person name="Spencer J."/>
            <person name="Clements A."/>
            <person name="Ali-Khan N."/>
            <person name="Mittnacht S."/>
            <person name="Broceno C."/>
            <person name="Burghammer M."/>
            <person name="Perrakis A."/>
            <person name="Marmorstein R."/>
            <person name="Gamblin S.J."/>
        </authorList>
    </citation>
    <scope>X-RAY CRYSTALLOGRAPHY (2.6 ANGSTROMS) OF 409-426 IN COMPLEX WITH RB1</scope>
</reference>
<protein>
    <recommendedName>
        <fullName evidence="31">Transcription factor E2F1</fullName>
        <shortName evidence="31">E2F-1</shortName>
    </recommendedName>
    <alternativeName>
        <fullName>PBR3</fullName>
    </alternativeName>
    <alternativeName>
        <fullName evidence="30">Retinoblastoma-associated protein 1</fullName>
        <shortName evidence="30">RBAP-1</shortName>
    </alternativeName>
    <alternativeName>
        <fullName evidence="29">Retinoblastoma-binding protein 3</fullName>
        <shortName evidence="29">RBBP-3</shortName>
    </alternativeName>
    <alternativeName>
        <fullName>pRB-binding protein E2F-1</fullName>
    </alternativeName>
</protein>
<name>E2F1_HUMAN</name>
<accession>Q01094</accession>
<accession>Q13143</accession>
<accession>Q92768</accession>